<accession>B3QSH8</accession>
<gene>
    <name evidence="1" type="primary">mdh</name>
    <name type="ordered locus">Ctha_0098</name>
</gene>
<organism>
    <name type="scientific">Chloroherpeton thalassium (strain ATCC 35110 / GB-78)</name>
    <dbReference type="NCBI Taxonomy" id="517418"/>
    <lineage>
        <taxon>Bacteria</taxon>
        <taxon>Pseudomonadati</taxon>
        <taxon>Chlorobiota</taxon>
        <taxon>Chlorobiia</taxon>
        <taxon>Chlorobiales</taxon>
        <taxon>Chloroherpetonaceae</taxon>
        <taxon>Chloroherpeton</taxon>
    </lineage>
</organism>
<protein>
    <recommendedName>
        <fullName evidence="1">Malate dehydrogenase</fullName>
        <ecNumber evidence="1">1.1.1.37</ecNumber>
    </recommendedName>
</protein>
<reference key="1">
    <citation type="submission" date="2008-06" db="EMBL/GenBank/DDBJ databases">
        <title>Complete sequence of Chloroherpeton thalassium ATCC 35110.</title>
        <authorList>
            <consortium name="US DOE Joint Genome Institute"/>
            <person name="Lucas S."/>
            <person name="Copeland A."/>
            <person name="Lapidus A."/>
            <person name="Glavina del Rio T."/>
            <person name="Dalin E."/>
            <person name="Tice H."/>
            <person name="Bruce D."/>
            <person name="Goodwin L."/>
            <person name="Pitluck S."/>
            <person name="Schmutz J."/>
            <person name="Larimer F."/>
            <person name="Land M."/>
            <person name="Hauser L."/>
            <person name="Kyrpides N."/>
            <person name="Mikhailova N."/>
            <person name="Liu Z."/>
            <person name="Li T."/>
            <person name="Zhao F."/>
            <person name="Overmann J."/>
            <person name="Bryant D.A."/>
            <person name="Richardson P."/>
        </authorList>
    </citation>
    <scope>NUCLEOTIDE SEQUENCE [LARGE SCALE GENOMIC DNA]</scope>
    <source>
        <strain>ATCC 35110 / GB-78</strain>
    </source>
</reference>
<comment type="function">
    <text evidence="1">Catalyzes the reversible oxidation of malate to oxaloacetate.</text>
</comment>
<comment type="catalytic activity">
    <reaction evidence="1">
        <text>(S)-malate + NAD(+) = oxaloacetate + NADH + H(+)</text>
        <dbReference type="Rhea" id="RHEA:21432"/>
        <dbReference type="ChEBI" id="CHEBI:15378"/>
        <dbReference type="ChEBI" id="CHEBI:15589"/>
        <dbReference type="ChEBI" id="CHEBI:16452"/>
        <dbReference type="ChEBI" id="CHEBI:57540"/>
        <dbReference type="ChEBI" id="CHEBI:57945"/>
        <dbReference type="EC" id="1.1.1.37"/>
    </reaction>
</comment>
<comment type="similarity">
    <text evidence="1">Belongs to the LDH/MDH superfamily. MDH type 3 family.</text>
</comment>
<feature type="chain" id="PRO_1000126130" description="Malate dehydrogenase">
    <location>
        <begin position="1"/>
        <end position="310"/>
    </location>
</feature>
<feature type="active site" description="Proton acceptor" evidence="1">
    <location>
        <position position="174"/>
    </location>
</feature>
<feature type="binding site" evidence="1">
    <location>
        <begin position="7"/>
        <end position="12"/>
    </location>
    <ligand>
        <name>NAD(+)</name>
        <dbReference type="ChEBI" id="CHEBI:57540"/>
    </ligand>
</feature>
<feature type="binding site" evidence="1">
    <location>
        <position position="32"/>
    </location>
    <ligand>
        <name>NAD(+)</name>
        <dbReference type="ChEBI" id="CHEBI:57540"/>
    </ligand>
</feature>
<feature type="binding site" evidence="1">
    <location>
        <position position="81"/>
    </location>
    <ligand>
        <name>substrate</name>
    </ligand>
</feature>
<feature type="binding site" evidence="1">
    <location>
        <position position="87"/>
    </location>
    <ligand>
        <name>substrate</name>
    </ligand>
</feature>
<feature type="binding site" evidence="1">
    <location>
        <position position="94"/>
    </location>
    <ligand>
        <name>NAD(+)</name>
        <dbReference type="ChEBI" id="CHEBI:57540"/>
    </ligand>
</feature>
<feature type="binding site" evidence="1">
    <location>
        <begin position="117"/>
        <end position="119"/>
    </location>
    <ligand>
        <name>NAD(+)</name>
        <dbReference type="ChEBI" id="CHEBI:57540"/>
    </ligand>
</feature>
<feature type="binding site" evidence="1">
    <location>
        <position position="119"/>
    </location>
    <ligand>
        <name>substrate</name>
    </ligand>
</feature>
<feature type="binding site" evidence="1">
    <location>
        <position position="150"/>
    </location>
    <ligand>
        <name>substrate</name>
    </ligand>
</feature>
<evidence type="ECO:0000255" key="1">
    <source>
        <dbReference type="HAMAP-Rule" id="MF_00487"/>
    </source>
</evidence>
<name>MDH_CHLT3</name>
<proteinExistence type="inferred from homology"/>
<dbReference type="EC" id="1.1.1.37" evidence="1"/>
<dbReference type="EMBL" id="CP001100">
    <property type="protein sequence ID" value="ACF12569.1"/>
    <property type="molecule type" value="Genomic_DNA"/>
</dbReference>
<dbReference type="RefSeq" id="WP_012498653.1">
    <property type="nucleotide sequence ID" value="NC_011026.1"/>
</dbReference>
<dbReference type="SMR" id="B3QSH8"/>
<dbReference type="STRING" id="517418.Ctha_0098"/>
<dbReference type="KEGG" id="cts:Ctha_0098"/>
<dbReference type="eggNOG" id="COG0039">
    <property type="taxonomic scope" value="Bacteria"/>
</dbReference>
<dbReference type="HOGENOM" id="CLU_045401_2_1_10"/>
<dbReference type="OrthoDB" id="9802969at2"/>
<dbReference type="Proteomes" id="UP000001208">
    <property type="component" value="Chromosome"/>
</dbReference>
<dbReference type="GO" id="GO:0004459">
    <property type="term" value="F:L-lactate dehydrogenase activity"/>
    <property type="evidence" value="ECO:0007669"/>
    <property type="project" value="TreeGrafter"/>
</dbReference>
<dbReference type="GO" id="GO:0030060">
    <property type="term" value="F:L-malate dehydrogenase (NAD+) activity"/>
    <property type="evidence" value="ECO:0007669"/>
    <property type="project" value="UniProtKB-UniRule"/>
</dbReference>
<dbReference type="GO" id="GO:0006089">
    <property type="term" value="P:lactate metabolic process"/>
    <property type="evidence" value="ECO:0007669"/>
    <property type="project" value="TreeGrafter"/>
</dbReference>
<dbReference type="GO" id="GO:0006099">
    <property type="term" value="P:tricarboxylic acid cycle"/>
    <property type="evidence" value="ECO:0007669"/>
    <property type="project" value="UniProtKB-UniRule"/>
</dbReference>
<dbReference type="CDD" id="cd01339">
    <property type="entry name" value="LDH-like_MDH"/>
    <property type="match status" value="1"/>
</dbReference>
<dbReference type="FunFam" id="3.40.50.720:FF:000018">
    <property type="entry name" value="Malate dehydrogenase"/>
    <property type="match status" value="1"/>
</dbReference>
<dbReference type="FunFam" id="3.90.110.10:FF:000004">
    <property type="entry name" value="Malate dehydrogenase"/>
    <property type="match status" value="1"/>
</dbReference>
<dbReference type="Gene3D" id="3.90.110.10">
    <property type="entry name" value="Lactate dehydrogenase/glycoside hydrolase, family 4, C-terminal"/>
    <property type="match status" value="1"/>
</dbReference>
<dbReference type="Gene3D" id="3.40.50.720">
    <property type="entry name" value="NAD(P)-binding Rossmann-like Domain"/>
    <property type="match status" value="1"/>
</dbReference>
<dbReference type="HAMAP" id="MF_00487">
    <property type="entry name" value="Malate_dehydrog_3"/>
    <property type="match status" value="1"/>
</dbReference>
<dbReference type="InterPro" id="IPR001557">
    <property type="entry name" value="L-lactate/malate_DH"/>
</dbReference>
<dbReference type="InterPro" id="IPR022383">
    <property type="entry name" value="Lactate/malate_DH_C"/>
</dbReference>
<dbReference type="InterPro" id="IPR001236">
    <property type="entry name" value="Lactate/malate_DH_N"/>
</dbReference>
<dbReference type="InterPro" id="IPR015955">
    <property type="entry name" value="Lactate_DH/Glyco_Ohase_4_C"/>
</dbReference>
<dbReference type="InterPro" id="IPR011275">
    <property type="entry name" value="Malate_DH_type3"/>
</dbReference>
<dbReference type="InterPro" id="IPR036291">
    <property type="entry name" value="NAD(P)-bd_dom_sf"/>
</dbReference>
<dbReference type="NCBIfam" id="TIGR01763">
    <property type="entry name" value="MalateDH_bact"/>
    <property type="match status" value="1"/>
</dbReference>
<dbReference type="NCBIfam" id="NF004863">
    <property type="entry name" value="PRK06223.1"/>
    <property type="match status" value="1"/>
</dbReference>
<dbReference type="PANTHER" id="PTHR43128">
    <property type="entry name" value="L-2-HYDROXYCARBOXYLATE DEHYDROGENASE (NAD(P)(+))"/>
    <property type="match status" value="1"/>
</dbReference>
<dbReference type="PANTHER" id="PTHR43128:SF16">
    <property type="entry name" value="L-LACTATE DEHYDROGENASE"/>
    <property type="match status" value="1"/>
</dbReference>
<dbReference type="Pfam" id="PF02866">
    <property type="entry name" value="Ldh_1_C"/>
    <property type="match status" value="1"/>
</dbReference>
<dbReference type="Pfam" id="PF00056">
    <property type="entry name" value="Ldh_1_N"/>
    <property type="match status" value="1"/>
</dbReference>
<dbReference type="PIRSF" id="PIRSF000102">
    <property type="entry name" value="Lac_mal_DH"/>
    <property type="match status" value="1"/>
</dbReference>
<dbReference type="PRINTS" id="PR00086">
    <property type="entry name" value="LLDHDRGNASE"/>
</dbReference>
<dbReference type="SUPFAM" id="SSF56327">
    <property type="entry name" value="LDH C-terminal domain-like"/>
    <property type="match status" value="1"/>
</dbReference>
<dbReference type="SUPFAM" id="SSF51735">
    <property type="entry name" value="NAD(P)-binding Rossmann-fold domains"/>
    <property type="match status" value="1"/>
</dbReference>
<keyword id="KW-0520">NAD</keyword>
<keyword id="KW-0560">Oxidoreductase</keyword>
<keyword id="KW-1185">Reference proteome</keyword>
<keyword id="KW-0816">Tricarboxylic acid cycle</keyword>
<sequence length="310" mass="33271">MKITVIGAGNVGATATQRIVEKQLAREVVLVDVVDGVPQGKALDMYESAPVELFDTRVVGTTGYEETAGSDIILITAGRPRKPGMSRDDLLAMNTEIVKTVTEEAVSKSPNAIIIVVSNPLDVMTYVAYVRSGFPKERVIGMAGVLDTARFRTFIAMELNVSVQDVNAFVLGGHGDSMVPVVKYTTVAGIPISELLPQDRIAALVDRARKGGIEIVNYLKTGSAYYAPSASAVEMIDAIVNDRKRIMPCSAYVTGQYGLNDVFVGVPVKLGRGGVEQVLEINLDEADRNALQASANEVKESCEKVNSMMQ</sequence>